<dbReference type="EMBL" id="AK020278">
    <property type="protein sequence ID" value="BAB32053.1"/>
    <property type="molecule type" value="mRNA"/>
</dbReference>
<dbReference type="EMBL" id="BC117083">
    <property type="protein sequence ID" value="AAI17084.1"/>
    <property type="molecule type" value="mRNA"/>
</dbReference>
<dbReference type="EMBL" id="BC117085">
    <property type="protein sequence ID" value="AAI17086.1"/>
    <property type="molecule type" value="mRNA"/>
</dbReference>
<dbReference type="CCDS" id="CCDS15615.1"/>
<dbReference type="RefSeq" id="NP_084336.1">
    <property type="nucleotide sequence ID" value="NM_030060.2"/>
</dbReference>
<dbReference type="SMR" id="Q9D275"/>
<dbReference type="BioGRID" id="237877">
    <property type="interactions" value="13"/>
</dbReference>
<dbReference type="FunCoup" id="Q9D275">
    <property type="interactions" value="623"/>
</dbReference>
<dbReference type="IntAct" id="Q9D275">
    <property type="interactions" value="13"/>
</dbReference>
<dbReference type="STRING" id="10090.ENSMUSP00000027943"/>
<dbReference type="iPTMnet" id="Q9D275"/>
<dbReference type="PhosphoSitePlus" id="Q9D275"/>
<dbReference type="PaxDb" id="10090-ENSMUSP00000027943"/>
<dbReference type="ProteomicsDB" id="273729"/>
<dbReference type="Antibodypedia" id="34609">
    <property type="antibodies" value="151 antibodies from 24 providers"/>
</dbReference>
<dbReference type="DNASU" id="381319"/>
<dbReference type="Ensembl" id="ENSMUST00000027943.6">
    <property type="protein sequence ID" value="ENSMUSP00000027943.5"/>
    <property type="gene ID" value="ENSMUSG00000026630.10"/>
</dbReference>
<dbReference type="GeneID" id="381319"/>
<dbReference type="KEGG" id="mmu:381319"/>
<dbReference type="UCSC" id="uc007ecd.1">
    <property type="organism name" value="mouse"/>
</dbReference>
<dbReference type="AGR" id="MGI:1925491"/>
<dbReference type="CTD" id="55509"/>
<dbReference type="MGI" id="MGI:1925491">
    <property type="gene designation" value="Batf3"/>
</dbReference>
<dbReference type="VEuPathDB" id="HostDB:ENSMUSG00000026630"/>
<dbReference type="eggNOG" id="KOG1414">
    <property type="taxonomic scope" value="Eukaryota"/>
</dbReference>
<dbReference type="GeneTree" id="ENSGT00940000161120"/>
<dbReference type="HOGENOM" id="CLU_088612_1_1_1"/>
<dbReference type="InParanoid" id="Q9D275"/>
<dbReference type="OMA" id="RNHEKIC"/>
<dbReference type="OrthoDB" id="86677at9989"/>
<dbReference type="PhylomeDB" id="Q9D275"/>
<dbReference type="TreeFam" id="TF332340"/>
<dbReference type="BioGRID-ORCS" id="381319">
    <property type="hits" value="2 hits in 81 CRISPR screens"/>
</dbReference>
<dbReference type="ChiTaRS" id="Batf3">
    <property type="organism name" value="mouse"/>
</dbReference>
<dbReference type="PRO" id="PR:Q9D275"/>
<dbReference type="Proteomes" id="UP000000589">
    <property type="component" value="Chromosome 1"/>
</dbReference>
<dbReference type="RNAct" id="Q9D275">
    <property type="molecule type" value="protein"/>
</dbReference>
<dbReference type="Bgee" id="ENSMUSG00000026630">
    <property type="expression patterns" value="Expressed in placenta labyrinth and 121 other cell types or tissues"/>
</dbReference>
<dbReference type="GO" id="GO:0005829">
    <property type="term" value="C:cytosol"/>
    <property type="evidence" value="ECO:0007669"/>
    <property type="project" value="Ensembl"/>
</dbReference>
<dbReference type="GO" id="GO:0005730">
    <property type="term" value="C:nucleolus"/>
    <property type="evidence" value="ECO:0007669"/>
    <property type="project" value="Ensembl"/>
</dbReference>
<dbReference type="GO" id="GO:0005654">
    <property type="term" value="C:nucleoplasm"/>
    <property type="evidence" value="ECO:0007669"/>
    <property type="project" value="Ensembl"/>
</dbReference>
<dbReference type="GO" id="GO:0090575">
    <property type="term" value="C:RNA polymerase II transcription regulator complex"/>
    <property type="evidence" value="ECO:0007669"/>
    <property type="project" value="Ensembl"/>
</dbReference>
<dbReference type="GO" id="GO:0001227">
    <property type="term" value="F:DNA-binding transcription repressor activity, RNA polymerase II-specific"/>
    <property type="evidence" value="ECO:0007669"/>
    <property type="project" value="Ensembl"/>
</dbReference>
<dbReference type="GO" id="GO:0000978">
    <property type="term" value="F:RNA polymerase II cis-regulatory region sequence-specific DNA binding"/>
    <property type="evidence" value="ECO:0007669"/>
    <property type="project" value="Ensembl"/>
</dbReference>
<dbReference type="GO" id="GO:0097028">
    <property type="term" value="P:dendritic cell differentiation"/>
    <property type="evidence" value="ECO:0000315"/>
    <property type="project" value="UniProtKB"/>
</dbReference>
<dbReference type="GO" id="GO:0043011">
    <property type="term" value="P:myeloid dendritic cell differentiation"/>
    <property type="evidence" value="ECO:0000315"/>
    <property type="project" value="UniProtKB"/>
</dbReference>
<dbReference type="GO" id="GO:0009615">
    <property type="term" value="P:response to virus"/>
    <property type="evidence" value="ECO:0000315"/>
    <property type="project" value="UniProtKB"/>
</dbReference>
<dbReference type="FunFam" id="1.20.5.170:FF:000043">
    <property type="entry name" value="Basic leucine zipper transcriptional factor ATF-like"/>
    <property type="match status" value="1"/>
</dbReference>
<dbReference type="Gene3D" id="1.20.5.170">
    <property type="match status" value="1"/>
</dbReference>
<dbReference type="InterPro" id="IPR000837">
    <property type="entry name" value="AP-1"/>
</dbReference>
<dbReference type="InterPro" id="IPR004827">
    <property type="entry name" value="bZIP"/>
</dbReference>
<dbReference type="InterPro" id="IPR046347">
    <property type="entry name" value="bZIP_sf"/>
</dbReference>
<dbReference type="PANTHER" id="PTHR23351:SF13">
    <property type="entry name" value="BASIC LEUCINE ZIPPER TRANSCRIPTIONAL FACTOR ATF-LIKE 3"/>
    <property type="match status" value="1"/>
</dbReference>
<dbReference type="PANTHER" id="PTHR23351">
    <property type="entry name" value="FOS TRANSCRIPTION FACTOR-RELATED"/>
    <property type="match status" value="1"/>
</dbReference>
<dbReference type="Pfam" id="PF00170">
    <property type="entry name" value="bZIP_1"/>
    <property type="match status" value="1"/>
</dbReference>
<dbReference type="PRINTS" id="PR00042">
    <property type="entry name" value="LEUZIPPRFOS"/>
</dbReference>
<dbReference type="SMART" id="SM00338">
    <property type="entry name" value="BRLZ"/>
    <property type="match status" value="1"/>
</dbReference>
<dbReference type="SUPFAM" id="SSF57959">
    <property type="entry name" value="Leucine zipper domain"/>
    <property type="match status" value="1"/>
</dbReference>
<dbReference type="PROSITE" id="PS50217">
    <property type="entry name" value="BZIP"/>
    <property type="match status" value="1"/>
</dbReference>
<dbReference type="PROSITE" id="PS00036">
    <property type="entry name" value="BZIP_BASIC"/>
    <property type="match status" value="1"/>
</dbReference>
<accession>Q9D275</accession>
<protein>
    <recommendedName>
        <fullName>Basic leucine zipper transcriptional factor ATF-like 3</fullName>
        <shortName>B-ATF-3</shortName>
    </recommendedName>
</protein>
<sequence length="118" mass="13657">MSQGPPAVSVLQRSVDAPGNQPQSPKDDDRKVRRREKNRVAAQRSRKKQTQKADKLHEEHESLEQENSVLRREISKLKEELRHLSEVLKEHEKMCPLLLCPMNFVQLRSDPVASCLPR</sequence>
<keyword id="KW-0010">Activator</keyword>
<keyword id="KW-0221">Differentiation</keyword>
<keyword id="KW-0238">DNA-binding</keyword>
<keyword id="KW-0539">Nucleus</keyword>
<keyword id="KW-0597">Phosphoprotein</keyword>
<keyword id="KW-1185">Reference proteome</keyword>
<keyword id="KW-0678">Repressor</keyword>
<keyword id="KW-0804">Transcription</keyword>
<keyword id="KW-0805">Transcription regulation</keyword>
<feature type="chain" id="PRO_0000326107" description="Basic leucine zipper transcriptional factor ATF-like 3">
    <location>
        <begin position="1"/>
        <end position="118"/>
    </location>
</feature>
<feature type="domain" description="bZIP" evidence="2">
    <location>
        <begin position="28"/>
        <end position="91"/>
    </location>
</feature>
<feature type="region of interest" description="Disordered" evidence="3">
    <location>
        <begin position="1"/>
        <end position="69"/>
    </location>
</feature>
<feature type="region of interest" description="Basic motif" evidence="2">
    <location>
        <begin position="30"/>
        <end position="55"/>
    </location>
</feature>
<feature type="region of interest" description="Leucine-zipper" evidence="2">
    <location>
        <begin position="56"/>
        <end position="84"/>
    </location>
</feature>
<feature type="compositionally biased region" description="Basic and acidic residues" evidence="3">
    <location>
        <begin position="51"/>
        <end position="69"/>
    </location>
</feature>
<feature type="modified residue" description="Phosphoserine" evidence="1">
    <location>
        <position position="2"/>
    </location>
</feature>
<feature type="modified residue" description="Phosphoserine" evidence="1">
    <location>
        <position position="24"/>
    </location>
</feature>
<reference key="1">
    <citation type="journal article" date="2005" name="Science">
        <title>The transcriptional landscape of the mammalian genome.</title>
        <authorList>
            <person name="Carninci P."/>
            <person name="Kasukawa T."/>
            <person name="Katayama S."/>
            <person name="Gough J."/>
            <person name="Frith M.C."/>
            <person name="Maeda N."/>
            <person name="Oyama R."/>
            <person name="Ravasi T."/>
            <person name="Lenhard B."/>
            <person name="Wells C."/>
            <person name="Kodzius R."/>
            <person name="Shimokawa K."/>
            <person name="Bajic V.B."/>
            <person name="Brenner S.E."/>
            <person name="Batalov S."/>
            <person name="Forrest A.R."/>
            <person name="Zavolan M."/>
            <person name="Davis M.J."/>
            <person name="Wilming L.G."/>
            <person name="Aidinis V."/>
            <person name="Allen J.E."/>
            <person name="Ambesi-Impiombato A."/>
            <person name="Apweiler R."/>
            <person name="Aturaliya R.N."/>
            <person name="Bailey T.L."/>
            <person name="Bansal M."/>
            <person name="Baxter L."/>
            <person name="Beisel K.W."/>
            <person name="Bersano T."/>
            <person name="Bono H."/>
            <person name="Chalk A.M."/>
            <person name="Chiu K.P."/>
            <person name="Choudhary V."/>
            <person name="Christoffels A."/>
            <person name="Clutterbuck D.R."/>
            <person name="Crowe M.L."/>
            <person name="Dalla E."/>
            <person name="Dalrymple B.P."/>
            <person name="de Bono B."/>
            <person name="Della Gatta G."/>
            <person name="di Bernardo D."/>
            <person name="Down T."/>
            <person name="Engstrom P."/>
            <person name="Fagiolini M."/>
            <person name="Faulkner G."/>
            <person name="Fletcher C.F."/>
            <person name="Fukushima T."/>
            <person name="Furuno M."/>
            <person name="Futaki S."/>
            <person name="Gariboldi M."/>
            <person name="Georgii-Hemming P."/>
            <person name="Gingeras T.R."/>
            <person name="Gojobori T."/>
            <person name="Green R.E."/>
            <person name="Gustincich S."/>
            <person name="Harbers M."/>
            <person name="Hayashi Y."/>
            <person name="Hensch T.K."/>
            <person name="Hirokawa N."/>
            <person name="Hill D."/>
            <person name="Huminiecki L."/>
            <person name="Iacono M."/>
            <person name="Ikeo K."/>
            <person name="Iwama A."/>
            <person name="Ishikawa T."/>
            <person name="Jakt M."/>
            <person name="Kanapin A."/>
            <person name="Katoh M."/>
            <person name="Kawasawa Y."/>
            <person name="Kelso J."/>
            <person name="Kitamura H."/>
            <person name="Kitano H."/>
            <person name="Kollias G."/>
            <person name="Krishnan S.P."/>
            <person name="Kruger A."/>
            <person name="Kummerfeld S.K."/>
            <person name="Kurochkin I.V."/>
            <person name="Lareau L.F."/>
            <person name="Lazarevic D."/>
            <person name="Lipovich L."/>
            <person name="Liu J."/>
            <person name="Liuni S."/>
            <person name="McWilliam S."/>
            <person name="Madan Babu M."/>
            <person name="Madera M."/>
            <person name="Marchionni L."/>
            <person name="Matsuda H."/>
            <person name="Matsuzawa S."/>
            <person name="Miki H."/>
            <person name="Mignone F."/>
            <person name="Miyake S."/>
            <person name="Morris K."/>
            <person name="Mottagui-Tabar S."/>
            <person name="Mulder N."/>
            <person name="Nakano N."/>
            <person name="Nakauchi H."/>
            <person name="Ng P."/>
            <person name="Nilsson R."/>
            <person name="Nishiguchi S."/>
            <person name="Nishikawa S."/>
            <person name="Nori F."/>
            <person name="Ohara O."/>
            <person name="Okazaki Y."/>
            <person name="Orlando V."/>
            <person name="Pang K.C."/>
            <person name="Pavan W.J."/>
            <person name="Pavesi G."/>
            <person name="Pesole G."/>
            <person name="Petrovsky N."/>
            <person name="Piazza S."/>
            <person name="Reed J."/>
            <person name="Reid J.F."/>
            <person name="Ring B.Z."/>
            <person name="Ringwald M."/>
            <person name="Rost B."/>
            <person name="Ruan Y."/>
            <person name="Salzberg S.L."/>
            <person name="Sandelin A."/>
            <person name="Schneider C."/>
            <person name="Schoenbach C."/>
            <person name="Sekiguchi K."/>
            <person name="Semple C.A."/>
            <person name="Seno S."/>
            <person name="Sessa L."/>
            <person name="Sheng Y."/>
            <person name="Shibata Y."/>
            <person name="Shimada H."/>
            <person name="Shimada K."/>
            <person name="Silva D."/>
            <person name="Sinclair B."/>
            <person name="Sperling S."/>
            <person name="Stupka E."/>
            <person name="Sugiura K."/>
            <person name="Sultana R."/>
            <person name="Takenaka Y."/>
            <person name="Taki K."/>
            <person name="Tammoja K."/>
            <person name="Tan S.L."/>
            <person name="Tang S."/>
            <person name="Taylor M.S."/>
            <person name="Tegner J."/>
            <person name="Teichmann S.A."/>
            <person name="Ueda H.R."/>
            <person name="van Nimwegen E."/>
            <person name="Verardo R."/>
            <person name="Wei C.L."/>
            <person name="Yagi K."/>
            <person name="Yamanishi H."/>
            <person name="Zabarovsky E."/>
            <person name="Zhu S."/>
            <person name="Zimmer A."/>
            <person name="Hide W."/>
            <person name="Bult C."/>
            <person name="Grimmond S.M."/>
            <person name="Teasdale R.D."/>
            <person name="Liu E.T."/>
            <person name="Brusic V."/>
            <person name="Quackenbush J."/>
            <person name="Wahlestedt C."/>
            <person name="Mattick J.S."/>
            <person name="Hume D.A."/>
            <person name="Kai C."/>
            <person name="Sasaki D."/>
            <person name="Tomaru Y."/>
            <person name="Fukuda S."/>
            <person name="Kanamori-Katayama M."/>
            <person name="Suzuki M."/>
            <person name="Aoki J."/>
            <person name="Arakawa T."/>
            <person name="Iida J."/>
            <person name="Imamura K."/>
            <person name="Itoh M."/>
            <person name="Kato T."/>
            <person name="Kawaji H."/>
            <person name="Kawagashira N."/>
            <person name="Kawashima T."/>
            <person name="Kojima M."/>
            <person name="Kondo S."/>
            <person name="Konno H."/>
            <person name="Nakano K."/>
            <person name="Ninomiya N."/>
            <person name="Nishio T."/>
            <person name="Okada M."/>
            <person name="Plessy C."/>
            <person name="Shibata K."/>
            <person name="Shiraki T."/>
            <person name="Suzuki S."/>
            <person name="Tagami M."/>
            <person name="Waki K."/>
            <person name="Watahiki A."/>
            <person name="Okamura-Oho Y."/>
            <person name="Suzuki H."/>
            <person name="Kawai J."/>
            <person name="Hayashizaki Y."/>
        </authorList>
    </citation>
    <scope>NUCLEOTIDE SEQUENCE [LARGE SCALE MRNA]</scope>
    <source>
        <strain>C57BL/6J</strain>
        <tissue>Cecum</tissue>
    </source>
</reference>
<reference key="2">
    <citation type="journal article" date="2004" name="Genome Res.">
        <title>The status, quality, and expansion of the NIH full-length cDNA project: the Mammalian Gene Collection (MGC).</title>
        <authorList>
            <consortium name="The MGC Project Team"/>
        </authorList>
    </citation>
    <scope>NUCLEOTIDE SEQUENCE [LARGE SCALE MRNA]</scope>
    <source>
        <tissue>Brain</tissue>
    </source>
</reference>
<reference key="3">
    <citation type="journal article" date="2008" name="Science">
        <title>Batf3 deficiency reveals a critical role for CD8alpha+ dendritic cells in cytotoxic T cell immunity.</title>
        <authorList>
            <person name="Hildner K."/>
            <person name="Edelson B.T."/>
            <person name="Purtha W.E."/>
            <person name="Diamond M."/>
            <person name="Matsushita H."/>
            <person name="Kohyama M."/>
            <person name="Calderon B."/>
            <person name="Schraml B.U."/>
            <person name="Unanue E.R."/>
            <person name="Diamond M.S."/>
            <person name="Schreiber R.D."/>
            <person name="Murphy T.L."/>
            <person name="Murphy K.M."/>
        </authorList>
    </citation>
    <scope>FUNCTION</scope>
    <scope>TISSUE SPECIFICITY</scope>
    <scope>DISRUPTION PHENOTYPE</scope>
</reference>
<reference key="4">
    <citation type="journal article" date="2010" name="J. Exp. Med.">
        <title>Peripheral CD103+ dendritic cells form a unified subset developmentally related to CD8alpha+ conventional dendritic cells.</title>
        <authorList>
            <person name="Edelson B.T."/>
            <person name="Kc W."/>
            <person name="Juang R."/>
            <person name="Kohyama M."/>
            <person name="Benoit L.A."/>
            <person name="Klekotka P.A."/>
            <person name="Moon C."/>
            <person name="Albring J.C."/>
            <person name="Ise W."/>
            <person name="Michael D.G."/>
            <person name="Bhattacharya D."/>
            <person name="Stappenbeck T.S."/>
            <person name="Holtzman M.J."/>
            <person name="Sung S.S."/>
            <person name="Murphy T.L."/>
            <person name="Hildner K."/>
            <person name="Murphy K.M."/>
        </authorList>
    </citation>
    <scope>FUNCTION</scope>
    <scope>DISRUPTION PHENOTYPE</scope>
</reference>
<reference key="5">
    <citation type="journal article" date="2011" name="Immunity">
        <title>CD8alpha(+) dendritic cells are an obligate cellular entry point for productive infection by Listeria monocytogenes.</title>
        <authorList>
            <person name="Edelson B.T."/>
            <person name="Bradstreet T.R."/>
            <person name="Hildner K."/>
            <person name="Carrero J.A."/>
            <person name="Frederick K.E."/>
            <person name="Kc W."/>
            <person name="Belizaire R."/>
            <person name="Aoshi T."/>
            <person name="Schreiber R.D."/>
            <person name="Miller M.J."/>
            <person name="Murphy T.L."/>
            <person name="Unanue E.R."/>
            <person name="Murphy K.M."/>
        </authorList>
    </citation>
    <scope>DISRUPTION PHENOTYPE</scope>
</reference>
<reference key="6">
    <citation type="journal article" date="2011" name="Immunity">
        <title>CD8alpha(+) dendritic cells are the critical source of interleukin-12 that controls acute infection by Toxoplasma gondii tachyzoites.</title>
        <authorList>
            <person name="Mashayekhi M."/>
            <person name="Sandau M.M."/>
            <person name="Dunay I.R."/>
            <person name="Frickel E.M."/>
            <person name="Khan A."/>
            <person name="Goldszmid R.S."/>
            <person name="Sher A."/>
            <person name="Ploegh H.L."/>
            <person name="Murphy T.L."/>
            <person name="Sibley L.D."/>
            <person name="Murphy K.M."/>
        </authorList>
    </citation>
    <scope>FUNCTION</scope>
    <scope>DISRUPTION PHENOTYPE</scope>
</reference>
<reference key="7">
    <citation type="journal article" date="2012" name="Nature">
        <title>Compensatory dendritic cell development mediated by BATF-IRF interactions.</title>
        <authorList>
            <person name="Tussiwand R."/>
            <person name="Lee W.L."/>
            <person name="Murphy T.L."/>
            <person name="Mashayekhi M."/>
            <person name="Kc W."/>
            <person name="Albring J.C."/>
            <person name="Satpathy A.T."/>
            <person name="Rotondo J.A."/>
            <person name="Edelson B.T."/>
            <person name="Kretzer N.M."/>
            <person name="Wu X."/>
            <person name="Weiss L.A."/>
            <person name="Glasmacher E."/>
            <person name="Li P."/>
            <person name="Liao W."/>
            <person name="Behnke M."/>
            <person name="Lam S.S."/>
            <person name="Aurthur C.T."/>
            <person name="Leonard W.J."/>
            <person name="Singh H."/>
            <person name="Stallings C.L."/>
            <person name="Sibley L.D."/>
            <person name="Schreiber R.D."/>
            <person name="Murphy K.M."/>
        </authorList>
    </citation>
    <scope>DISRUPTION PHENOTYPE</scope>
</reference>
<gene>
    <name type="primary">Batf3</name>
</gene>
<evidence type="ECO:0000250" key="1">
    <source>
        <dbReference type="UniProtKB" id="Q9NR55"/>
    </source>
</evidence>
<evidence type="ECO:0000255" key="2">
    <source>
        <dbReference type="PROSITE-ProRule" id="PRU00978"/>
    </source>
</evidence>
<evidence type="ECO:0000256" key="3">
    <source>
        <dbReference type="SAM" id="MobiDB-lite"/>
    </source>
</evidence>
<evidence type="ECO:0000269" key="4">
    <source>
    </source>
</evidence>
<evidence type="ECO:0000269" key="5">
    <source>
    </source>
</evidence>
<evidence type="ECO:0000269" key="6">
    <source>
    </source>
</evidence>
<evidence type="ECO:0000269" key="7">
    <source>
    </source>
</evidence>
<evidence type="ECO:0000269" key="8">
    <source>
    </source>
</evidence>
<evidence type="ECO:0000305" key="9"/>
<evidence type="ECO:0000305" key="10">
    <source>
    </source>
</evidence>
<comment type="function">
    <text evidence="4 5 7">AP-1 family transcription factor that controls the differentiation of CD8(+) thymic conventional dendritic cells in the immune system. Acts via the formation of a heterodimer with JUN family proteins that recognizes and binds DNA sequence 5'-TGA[CG]TCA-3' and regulates expression of target genes. Required for development of CD8-alpha(+) classical dendritic cells (cDCs) and related CD103(+) dendritic cells that cross-present antigens to CD8 T-cells and produce interleukin-12 (IL12) in response to pathogens.</text>
</comment>
<comment type="subunit">
    <text>Heterodimer; heterodimerizes with JUN family proteins. Interacts with JUN.</text>
</comment>
<comment type="subcellular location">
    <subcellularLocation>
        <location evidence="2">Nucleus</location>
    </subcellularLocation>
</comment>
<comment type="tissue specificity">
    <text evidence="4">Highly expressed in CD8-alpha(+) classical dendritic cells (cDCs), with low to absent expression in other immune cells and non-immune tissues.</text>
</comment>
<comment type="disruption phenotype">
    <text evidence="4 5 6 7 8">Selective loss of CD8-alpha(+) classical dendritic cells (cDCs) and CD103(+) dendritic cells, without abnormalities in other hematopoietic cell types or architecture. Dendritic cells are defective in cross-presentation, and mice lack virus-specific CD8(+) T-cell responses to West Nile virus. Mice also show reduced priming of CD8 T-cells after pulmonary Sendai virus infection, with increased pulmonary inflammation. Mice are extremely susceptible to T.gondii infection, with decreased production of interleukin-12 (IL12) and interferon-gamma. In contrast, mice are more resistant to L.monocytogenes infection.</text>
</comment>
<comment type="miscellaneous">
    <text evidence="10">The increased protection toward L.monocytogenes infection in mice lacking Batf3 suggests that CD8-alpha(+) classical dendritic cells (cDCs) and CD103(+) dendritic cells are an entry point for infection by L.monocytogenes.</text>
</comment>
<comment type="similarity">
    <text evidence="9">Belongs to the bZIP family.</text>
</comment>
<name>BATF3_MOUSE</name>
<organism>
    <name type="scientific">Mus musculus</name>
    <name type="common">Mouse</name>
    <dbReference type="NCBI Taxonomy" id="10090"/>
    <lineage>
        <taxon>Eukaryota</taxon>
        <taxon>Metazoa</taxon>
        <taxon>Chordata</taxon>
        <taxon>Craniata</taxon>
        <taxon>Vertebrata</taxon>
        <taxon>Euteleostomi</taxon>
        <taxon>Mammalia</taxon>
        <taxon>Eutheria</taxon>
        <taxon>Euarchontoglires</taxon>
        <taxon>Glires</taxon>
        <taxon>Rodentia</taxon>
        <taxon>Myomorpha</taxon>
        <taxon>Muroidea</taxon>
        <taxon>Muridae</taxon>
        <taxon>Murinae</taxon>
        <taxon>Mus</taxon>
        <taxon>Mus</taxon>
    </lineage>
</organism>
<proteinExistence type="evidence at transcript level"/>